<organism>
    <name type="scientific">Staphylococcus epidermidis (strain ATCC 35984 / DSM 28319 / BCRC 17069 / CCUG 31568 / BM 3577 / RP62A)</name>
    <dbReference type="NCBI Taxonomy" id="176279"/>
    <lineage>
        <taxon>Bacteria</taxon>
        <taxon>Bacillati</taxon>
        <taxon>Bacillota</taxon>
        <taxon>Bacilli</taxon>
        <taxon>Bacillales</taxon>
        <taxon>Staphylococcaceae</taxon>
        <taxon>Staphylococcus</taxon>
    </lineage>
</organism>
<keyword id="KW-1003">Cell membrane</keyword>
<keyword id="KW-0449">Lipoprotein</keyword>
<keyword id="KW-0472">Membrane</keyword>
<keyword id="KW-0564">Palmitate</keyword>
<keyword id="KW-1185">Reference proteome</keyword>
<keyword id="KW-0732">Signal</keyword>
<comment type="subcellular location">
    <subcellularLocation>
        <location evidence="1">Cell membrane</location>
        <topology evidence="1">Lipid-anchor</topology>
    </subcellularLocation>
</comment>
<comment type="similarity">
    <text evidence="2">Belongs to the staphylococcal tandem lipoprotein family.</text>
</comment>
<gene>
    <name type="ordered locus">SERP2422</name>
</gene>
<sequence>MRYLKKVTIYISLLILTIFIGGCGFINKEDSKETEIKQNFNKMLNVYPTKNLEDFYDKEGFRDEEFDKGDKGTWIIRSEMTKQPKGKIMTSRGMVLYINRNTRTAKGYFLIDEIKDDNSGRPIENEKKYPVKMNHNKIFPTKPISDDKLKKEIENFKFFVQYGDFKNLKDYKDGEISYNPNVPSYSAQYQLNNNDNNVKQLRKRYDIPTNQAPKLLLKGDGDLKGSSVGSKNLEFTFVENKEENIFFTDAVQFTPSEDDES</sequence>
<dbReference type="EMBL" id="CP000029">
    <property type="protein sequence ID" value="AAW53263.1"/>
    <property type="molecule type" value="Genomic_DNA"/>
</dbReference>
<dbReference type="RefSeq" id="WP_002505875.1">
    <property type="nucleotide sequence ID" value="NC_002976.3"/>
</dbReference>
<dbReference type="SMR" id="Q5HKC6"/>
<dbReference type="KEGG" id="ser:SERP2422"/>
<dbReference type="eggNOG" id="ENOG5033UD8">
    <property type="taxonomic scope" value="Bacteria"/>
</dbReference>
<dbReference type="HOGENOM" id="CLU_071589_0_0_9"/>
<dbReference type="Proteomes" id="UP000000531">
    <property type="component" value="Chromosome"/>
</dbReference>
<dbReference type="GO" id="GO:0005886">
    <property type="term" value="C:plasma membrane"/>
    <property type="evidence" value="ECO:0007669"/>
    <property type="project" value="UniProtKB-SubCell"/>
</dbReference>
<dbReference type="Gene3D" id="2.50.20.40">
    <property type="match status" value="1"/>
</dbReference>
<dbReference type="InterPro" id="IPR007595">
    <property type="entry name" value="Csa"/>
</dbReference>
<dbReference type="InterPro" id="IPR038641">
    <property type="entry name" value="Csa_sf"/>
</dbReference>
<dbReference type="NCBIfam" id="TIGR01742">
    <property type="entry name" value="SA_tandem_lipo"/>
    <property type="match status" value="1"/>
</dbReference>
<dbReference type="Pfam" id="PF04507">
    <property type="entry name" value="DUF576"/>
    <property type="match status" value="1"/>
</dbReference>
<dbReference type="PROSITE" id="PS51257">
    <property type="entry name" value="PROKAR_LIPOPROTEIN"/>
    <property type="match status" value="1"/>
</dbReference>
<feature type="signal peptide" evidence="1">
    <location>
        <begin position="1"/>
        <end position="22"/>
    </location>
</feature>
<feature type="chain" id="PRO_0000282183" description="Uncharacterized lipoprotein SERP2422">
    <location>
        <begin position="23"/>
        <end position="261"/>
    </location>
</feature>
<feature type="lipid moiety-binding region" description="N-palmitoyl cysteine" evidence="1">
    <location>
        <position position="23"/>
    </location>
</feature>
<feature type="lipid moiety-binding region" description="S-diacylglycerol cysteine" evidence="1">
    <location>
        <position position="23"/>
    </location>
</feature>
<accession>Q5HKC6</accession>
<name>Y2422_STAEQ</name>
<reference key="1">
    <citation type="journal article" date="2005" name="J. Bacteriol.">
        <title>Insights on evolution of virulence and resistance from the complete genome analysis of an early methicillin-resistant Staphylococcus aureus strain and a biofilm-producing methicillin-resistant Staphylococcus epidermidis strain.</title>
        <authorList>
            <person name="Gill S.R."/>
            <person name="Fouts D.E."/>
            <person name="Archer G.L."/>
            <person name="Mongodin E.F."/>
            <person name="DeBoy R.T."/>
            <person name="Ravel J."/>
            <person name="Paulsen I.T."/>
            <person name="Kolonay J.F."/>
            <person name="Brinkac L.M."/>
            <person name="Beanan M.J."/>
            <person name="Dodson R.J."/>
            <person name="Daugherty S.C."/>
            <person name="Madupu R."/>
            <person name="Angiuoli S.V."/>
            <person name="Durkin A.S."/>
            <person name="Haft D.H."/>
            <person name="Vamathevan J.J."/>
            <person name="Khouri H."/>
            <person name="Utterback T.R."/>
            <person name="Lee C."/>
            <person name="Dimitrov G."/>
            <person name="Jiang L."/>
            <person name="Qin H."/>
            <person name="Weidman J."/>
            <person name="Tran K."/>
            <person name="Kang K.H."/>
            <person name="Hance I.R."/>
            <person name="Nelson K.E."/>
            <person name="Fraser C.M."/>
        </authorList>
    </citation>
    <scope>NUCLEOTIDE SEQUENCE [LARGE SCALE GENOMIC DNA]</scope>
    <source>
        <strain>ATCC 35984 / DSM 28319 / BCRC 17069 / CCUG 31568 / BM 3577 / RP62A</strain>
    </source>
</reference>
<proteinExistence type="inferred from homology"/>
<evidence type="ECO:0000255" key="1">
    <source>
        <dbReference type="PROSITE-ProRule" id="PRU00303"/>
    </source>
</evidence>
<evidence type="ECO:0000305" key="2"/>
<protein>
    <recommendedName>
        <fullName>Uncharacterized lipoprotein SERP2422</fullName>
    </recommendedName>
</protein>